<sequence>MGKFQVISHPLIQHKLSILRRTTTSTKDFRELVDEIAMLMGYEVSRDLPLEDVEIQTPVATTVQKQLAGKKLAIVPILRAGIGMVDGFLSLVPAAKVGHIGMYRDEETFQPVEYLVKLPEDIDQRQIFVVDPMLATGGSAILAVDSLKKRGAASIKFVCLVAAPEGVAALQEAHPDVDIYTAALDEKLNEHGYIVPGLGDAGDRLFGTK</sequence>
<accession>P67398</accession>
<accession>Q8DYA4</accession>
<accession>Q8E3W9</accession>
<keyword id="KW-0021">Allosteric enzyme</keyword>
<keyword id="KW-0328">Glycosyltransferase</keyword>
<keyword id="KW-0342">GTP-binding</keyword>
<keyword id="KW-0460">Magnesium</keyword>
<keyword id="KW-0547">Nucleotide-binding</keyword>
<keyword id="KW-0808">Transferase</keyword>
<organism>
    <name type="scientific">Streptococcus agalactiae serotype III (strain NEM316)</name>
    <dbReference type="NCBI Taxonomy" id="211110"/>
    <lineage>
        <taxon>Bacteria</taxon>
        <taxon>Bacillati</taxon>
        <taxon>Bacillota</taxon>
        <taxon>Bacilli</taxon>
        <taxon>Lactobacillales</taxon>
        <taxon>Streptococcaceae</taxon>
        <taxon>Streptococcus</taxon>
    </lineage>
</organism>
<gene>
    <name evidence="1" type="primary">upp</name>
    <name type="ordered locus">gbs1635</name>
</gene>
<dbReference type="EC" id="2.4.2.9" evidence="1"/>
<dbReference type="EMBL" id="AL766852">
    <property type="protein sequence ID" value="CAD47294.1"/>
    <property type="molecule type" value="Genomic_DNA"/>
</dbReference>
<dbReference type="RefSeq" id="WP_000514490.1">
    <property type="nucleotide sequence ID" value="NC_004368.1"/>
</dbReference>
<dbReference type="SMR" id="P67398"/>
<dbReference type="GeneID" id="66886432"/>
<dbReference type="KEGG" id="san:upp"/>
<dbReference type="eggNOG" id="COG0035">
    <property type="taxonomic scope" value="Bacteria"/>
</dbReference>
<dbReference type="HOGENOM" id="CLU_067096_2_2_9"/>
<dbReference type="UniPathway" id="UPA00574">
    <property type="reaction ID" value="UER00636"/>
</dbReference>
<dbReference type="Proteomes" id="UP000000823">
    <property type="component" value="Chromosome"/>
</dbReference>
<dbReference type="GO" id="GO:0005525">
    <property type="term" value="F:GTP binding"/>
    <property type="evidence" value="ECO:0007669"/>
    <property type="project" value="UniProtKB-KW"/>
</dbReference>
<dbReference type="GO" id="GO:0000287">
    <property type="term" value="F:magnesium ion binding"/>
    <property type="evidence" value="ECO:0007669"/>
    <property type="project" value="UniProtKB-UniRule"/>
</dbReference>
<dbReference type="GO" id="GO:0004845">
    <property type="term" value="F:uracil phosphoribosyltransferase activity"/>
    <property type="evidence" value="ECO:0007669"/>
    <property type="project" value="UniProtKB-UniRule"/>
</dbReference>
<dbReference type="GO" id="GO:0044206">
    <property type="term" value="P:UMP salvage"/>
    <property type="evidence" value="ECO:0007669"/>
    <property type="project" value="UniProtKB-UniRule"/>
</dbReference>
<dbReference type="GO" id="GO:0006223">
    <property type="term" value="P:uracil salvage"/>
    <property type="evidence" value="ECO:0007669"/>
    <property type="project" value="InterPro"/>
</dbReference>
<dbReference type="CDD" id="cd06223">
    <property type="entry name" value="PRTases_typeI"/>
    <property type="match status" value="1"/>
</dbReference>
<dbReference type="FunFam" id="3.40.50.2020:FF:000003">
    <property type="entry name" value="Uracil phosphoribosyltransferase"/>
    <property type="match status" value="1"/>
</dbReference>
<dbReference type="Gene3D" id="3.40.50.2020">
    <property type="match status" value="1"/>
</dbReference>
<dbReference type="HAMAP" id="MF_01218_B">
    <property type="entry name" value="Upp_B"/>
    <property type="match status" value="1"/>
</dbReference>
<dbReference type="InterPro" id="IPR000836">
    <property type="entry name" value="PRibTrfase_dom"/>
</dbReference>
<dbReference type="InterPro" id="IPR029057">
    <property type="entry name" value="PRTase-like"/>
</dbReference>
<dbReference type="InterPro" id="IPR034332">
    <property type="entry name" value="Upp_B"/>
</dbReference>
<dbReference type="InterPro" id="IPR050054">
    <property type="entry name" value="UPRTase/APRTase"/>
</dbReference>
<dbReference type="InterPro" id="IPR005765">
    <property type="entry name" value="Ura_phspho_trans"/>
</dbReference>
<dbReference type="NCBIfam" id="NF001097">
    <property type="entry name" value="PRK00129.1"/>
    <property type="match status" value="1"/>
</dbReference>
<dbReference type="NCBIfam" id="TIGR01091">
    <property type="entry name" value="upp"/>
    <property type="match status" value="1"/>
</dbReference>
<dbReference type="PANTHER" id="PTHR32315">
    <property type="entry name" value="ADENINE PHOSPHORIBOSYLTRANSFERASE"/>
    <property type="match status" value="1"/>
</dbReference>
<dbReference type="PANTHER" id="PTHR32315:SF4">
    <property type="entry name" value="URACIL PHOSPHORIBOSYLTRANSFERASE, CHLOROPLASTIC"/>
    <property type="match status" value="1"/>
</dbReference>
<dbReference type="Pfam" id="PF14681">
    <property type="entry name" value="UPRTase"/>
    <property type="match status" value="1"/>
</dbReference>
<dbReference type="SUPFAM" id="SSF53271">
    <property type="entry name" value="PRTase-like"/>
    <property type="match status" value="1"/>
</dbReference>
<name>UPP_STRA3</name>
<proteinExistence type="inferred from homology"/>
<protein>
    <recommendedName>
        <fullName evidence="1">Uracil phosphoribosyltransferase</fullName>
        <ecNumber evidence="1">2.4.2.9</ecNumber>
    </recommendedName>
    <alternativeName>
        <fullName evidence="1">UMP pyrophosphorylase</fullName>
    </alternativeName>
    <alternativeName>
        <fullName evidence="1">UPRTase</fullName>
    </alternativeName>
</protein>
<feature type="chain" id="PRO_0000120889" description="Uracil phosphoribosyltransferase">
    <location>
        <begin position="1"/>
        <end position="209"/>
    </location>
</feature>
<feature type="binding site" evidence="1">
    <location>
        <position position="79"/>
    </location>
    <ligand>
        <name>5-phospho-alpha-D-ribose 1-diphosphate</name>
        <dbReference type="ChEBI" id="CHEBI:58017"/>
    </ligand>
</feature>
<feature type="binding site" evidence="1">
    <location>
        <position position="104"/>
    </location>
    <ligand>
        <name>5-phospho-alpha-D-ribose 1-diphosphate</name>
        <dbReference type="ChEBI" id="CHEBI:58017"/>
    </ligand>
</feature>
<feature type="binding site" evidence="1">
    <location>
        <begin position="131"/>
        <end position="139"/>
    </location>
    <ligand>
        <name>5-phospho-alpha-D-ribose 1-diphosphate</name>
        <dbReference type="ChEBI" id="CHEBI:58017"/>
    </ligand>
</feature>
<feature type="binding site" evidence="1">
    <location>
        <position position="194"/>
    </location>
    <ligand>
        <name>uracil</name>
        <dbReference type="ChEBI" id="CHEBI:17568"/>
    </ligand>
</feature>
<feature type="binding site" evidence="1">
    <location>
        <begin position="199"/>
        <end position="201"/>
    </location>
    <ligand>
        <name>uracil</name>
        <dbReference type="ChEBI" id="CHEBI:17568"/>
    </ligand>
</feature>
<feature type="binding site" evidence="1">
    <location>
        <position position="200"/>
    </location>
    <ligand>
        <name>5-phospho-alpha-D-ribose 1-diphosphate</name>
        <dbReference type="ChEBI" id="CHEBI:58017"/>
    </ligand>
</feature>
<comment type="function">
    <text evidence="1">Catalyzes the conversion of uracil and 5-phospho-alpha-D-ribose 1-diphosphate (PRPP) to UMP and diphosphate.</text>
</comment>
<comment type="catalytic activity">
    <reaction evidence="1">
        <text>UMP + diphosphate = 5-phospho-alpha-D-ribose 1-diphosphate + uracil</text>
        <dbReference type="Rhea" id="RHEA:13017"/>
        <dbReference type="ChEBI" id="CHEBI:17568"/>
        <dbReference type="ChEBI" id="CHEBI:33019"/>
        <dbReference type="ChEBI" id="CHEBI:57865"/>
        <dbReference type="ChEBI" id="CHEBI:58017"/>
        <dbReference type="EC" id="2.4.2.9"/>
    </reaction>
</comment>
<comment type="cofactor">
    <cofactor evidence="1">
        <name>Mg(2+)</name>
        <dbReference type="ChEBI" id="CHEBI:18420"/>
    </cofactor>
    <text evidence="1">Binds 1 Mg(2+) ion per subunit. The magnesium is bound as Mg-PRPP.</text>
</comment>
<comment type="activity regulation">
    <text evidence="1">Allosterically activated by GTP.</text>
</comment>
<comment type="pathway">
    <text evidence="1">Pyrimidine metabolism; UMP biosynthesis via salvage pathway; UMP from uracil: step 1/1.</text>
</comment>
<comment type="similarity">
    <text evidence="1">Belongs to the UPRTase family.</text>
</comment>
<reference key="1">
    <citation type="journal article" date="2002" name="Mol. Microbiol.">
        <title>Genome sequence of Streptococcus agalactiae, a pathogen causing invasive neonatal disease.</title>
        <authorList>
            <person name="Glaser P."/>
            <person name="Rusniok C."/>
            <person name="Buchrieser C."/>
            <person name="Chevalier F."/>
            <person name="Frangeul L."/>
            <person name="Msadek T."/>
            <person name="Zouine M."/>
            <person name="Couve E."/>
            <person name="Lalioui L."/>
            <person name="Poyart C."/>
            <person name="Trieu-Cuot P."/>
            <person name="Kunst F."/>
        </authorList>
    </citation>
    <scope>NUCLEOTIDE SEQUENCE [LARGE SCALE GENOMIC DNA]</scope>
    <source>
        <strain>NEM316</strain>
    </source>
</reference>
<evidence type="ECO:0000255" key="1">
    <source>
        <dbReference type="HAMAP-Rule" id="MF_01218"/>
    </source>
</evidence>